<keyword id="KW-0053">Apoptosis</keyword>
<keyword id="KW-0121">Carboxypeptidase</keyword>
<keyword id="KW-0325">Glycoprotein</keyword>
<keyword id="KW-0333">Golgi apparatus</keyword>
<keyword id="KW-0378">Hydrolase</keyword>
<keyword id="KW-0472">Membrane</keyword>
<keyword id="KW-0645">Protease</keyword>
<keyword id="KW-1185">Reference proteome</keyword>
<keyword id="KW-0732">Signal</keyword>
<keyword id="KW-0812">Transmembrane</keyword>
<keyword id="KW-1133">Transmembrane helix</keyword>
<reference key="1">
    <citation type="journal article" date="2008" name="Genome Biol.">
        <title>The genome sequence of the model ascomycete fungus Podospora anserina.</title>
        <authorList>
            <person name="Espagne E."/>
            <person name="Lespinet O."/>
            <person name="Malagnac F."/>
            <person name="Da Silva C."/>
            <person name="Jaillon O."/>
            <person name="Porcel B.M."/>
            <person name="Couloux A."/>
            <person name="Aury J.-M."/>
            <person name="Segurens B."/>
            <person name="Poulain J."/>
            <person name="Anthouard V."/>
            <person name="Grossetete S."/>
            <person name="Khalili H."/>
            <person name="Coppin E."/>
            <person name="Dequard-Chablat M."/>
            <person name="Picard M."/>
            <person name="Contamine V."/>
            <person name="Arnaise S."/>
            <person name="Bourdais A."/>
            <person name="Berteaux-Lecellier V."/>
            <person name="Gautheret D."/>
            <person name="de Vries R.P."/>
            <person name="Battaglia E."/>
            <person name="Coutinho P.M."/>
            <person name="Danchin E.G.J."/>
            <person name="Henrissat B."/>
            <person name="El Khoury R."/>
            <person name="Sainsard-Chanet A."/>
            <person name="Boivin A."/>
            <person name="Pinan-Lucarre B."/>
            <person name="Sellem C.H."/>
            <person name="Debuchy R."/>
            <person name="Wincker P."/>
            <person name="Weissenbach J."/>
            <person name="Silar P."/>
        </authorList>
    </citation>
    <scope>NUCLEOTIDE SEQUENCE [LARGE SCALE GENOMIC DNA]</scope>
    <source>
        <strain>S / ATCC MYA-4624 / DSM 980 / FGSC 10383</strain>
    </source>
</reference>
<reference key="2">
    <citation type="journal article" date="2014" name="Genetics">
        <title>Maintaining two mating types: Structure of the mating type locus and its role in heterokaryosis in Podospora anserina.</title>
        <authorList>
            <person name="Grognet P."/>
            <person name="Bidard F."/>
            <person name="Kuchly C."/>
            <person name="Tong L.C.H."/>
            <person name="Coppin E."/>
            <person name="Benkhali J.A."/>
            <person name="Couloux A."/>
            <person name="Wincker P."/>
            <person name="Debuchy R."/>
            <person name="Silar P."/>
        </authorList>
    </citation>
    <scope>GENOME REANNOTATION</scope>
    <source>
        <strain>S / ATCC MYA-4624 / DSM 980 / FGSC 10383</strain>
    </source>
</reference>
<gene>
    <name type="primary">KEX1</name>
    <name type="ordered locus">Pa_2_10030</name>
    <name type="ORF">PODANS_2_10030</name>
</gene>
<comment type="function">
    <text evidence="1">Protease with a carboxypeptidase B-like function involved in the C-terminal processing of the lysine and arginine residues from protein precursors. Promotes cell fusion and is involved in the programmed cell death (By similarity).</text>
</comment>
<comment type="catalytic activity">
    <reaction>
        <text>Preferential release of a C-terminal arginine or lysine residue.</text>
        <dbReference type="EC" id="3.4.16.6"/>
    </reaction>
</comment>
<comment type="subcellular location">
    <subcellularLocation>
        <location evidence="1">Golgi apparatus</location>
        <location evidence="1">trans-Golgi network membrane</location>
        <topology evidence="1">Single-pass type I membrane protein</topology>
    </subcellularLocation>
</comment>
<comment type="similarity">
    <text evidence="5">Belongs to the peptidase S10 family.</text>
</comment>
<proteinExistence type="inferred from homology"/>
<evidence type="ECO:0000250" key="1"/>
<evidence type="ECO:0000255" key="2"/>
<evidence type="ECO:0000255" key="3">
    <source>
        <dbReference type="PROSITE-ProRule" id="PRU10074"/>
    </source>
</evidence>
<evidence type="ECO:0000256" key="4">
    <source>
        <dbReference type="SAM" id="MobiDB-lite"/>
    </source>
</evidence>
<evidence type="ECO:0000305" key="5"/>
<sequence length="585" mass="65374">MCLLARVRHIEITPDVNGNMFFWHFQNKHIANKQRTVIWLNGGPGCSSEDGALMEIGPYRLKDKDTLVYNEGAWNEFANVLFVDNPVGTGFSYVDTNAYVRELDVMADQFVTFLEKWFKLFPEYEHDDIFIAGESYAGQYIPYIAKAILERNKKGGESSYKWNLAGLLIGNGWISPPEQYEAYLQFAYEKGIVKKGSDAASKLEVQQRICSKQLAVGPALVDNTDCEKILQDLLQLTATSKGGEQRCVNMYDVRLTDTYPSCGMNWPPDLDAVTPYLRRNDVIQALHVNPNKVTGWVECNGQVGANFKPSSKPSVELLPDLLKEVPIILFSGSEDLICNHLGTEALISNLQWNGGKGFEITPGTWAPRRDWTFEGEAAGFWQEARNLTYVVFYNSSHMVPFDYPRRTRDMLDRFMGVDISSIGGKPTDSRLDGEKVPETTVGGVAGNGTDAQQAEKEKLDTARWEAYRKSGEIVLVIVAFSAAGWGWWVWRERKKRRGYMGVSGGENISPSGEARGREGFRDKRSAADLEAGDFDENELDDLHMRTPTTVMGGEGNDPRYSVGAASEDSEDEEDVKGKGKEKMSG</sequence>
<organism>
    <name type="scientific">Podospora anserina (strain S / ATCC MYA-4624 / DSM 980 / FGSC 10383)</name>
    <name type="common">Pleurage anserina</name>
    <dbReference type="NCBI Taxonomy" id="515849"/>
    <lineage>
        <taxon>Eukaryota</taxon>
        <taxon>Fungi</taxon>
        <taxon>Dikarya</taxon>
        <taxon>Ascomycota</taxon>
        <taxon>Pezizomycotina</taxon>
        <taxon>Sordariomycetes</taxon>
        <taxon>Sordariomycetidae</taxon>
        <taxon>Sordariales</taxon>
        <taxon>Podosporaceae</taxon>
        <taxon>Podospora</taxon>
        <taxon>Podospora anserina</taxon>
    </lineage>
</organism>
<accession>B2B762</accession>
<accession>A0A090D5M0</accession>
<feature type="signal peptide" evidence="2">
    <location>
        <begin position="1"/>
        <end position="18"/>
    </location>
</feature>
<feature type="chain" id="PRO_0000411941" description="Pheromone-processing carboxypeptidase KEX1">
    <location>
        <begin position="19"/>
        <end position="585"/>
    </location>
</feature>
<feature type="topological domain" description="Lumenal" evidence="2">
    <location>
        <begin position="19"/>
        <end position="469"/>
    </location>
</feature>
<feature type="transmembrane region" description="Helical" evidence="2">
    <location>
        <begin position="470"/>
        <end position="490"/>
    </location>
</feature>
<feature type="topological domain" description="Cytoplasmic" evidence="2">
    <location>
        <begin position="491"/>
        <end position="585"/>
    </location>
</feature>
<feature type="region of interest" description="Disordered" evidence="4">
    <location>
        <begin position="526"/>
        <end position="585"/>
    </location>
</feature>
<feature type="compositionally biased region" description="Acidic residues" evidence="4">
    <location>
        <begin position="530"/>
        <end position="539"/>
    </location>
</feature>
<feature type="compositionally biased region" description="Basic and acidic residues" evidence="4">
    <location>
        <begin position="575"/>
        <end position="585"/>
    </location>
</feature>
<feature type="active site" evidence="3">
    <location>
        <position position="135"/>
    </location>
</feature>
<feature type="active site" evidence="3">
    <location>
        <position position="335"/>
    </location>
</feature>
<feature type="active site" evidence="3">
    <location>
        <position position="397"/>
    </location>
</feature>
<feature type="glycosylation site" description="N-linked (GlcNAc...) asparagine" evidence="2">
    <location>
        <position position="386"/>
    </location>
</feature>
<feature type="glycosylation site" description="N-linked (GlcNAc...) asparagine" evidence="2">
    <location>
        <position position="394"/>
    </location>
</feature>
<feature type="glycosylation site" description="N-linked (GlcNAc...) asparagine" evidence="2">
    <location>
        <position position="447"/>
    </location>
</feature>
<protein>
    <recommendedName>
        <fullName>Pheromone-processing carboxypeptidase KEX1</fullName>
        <ecNumber>3.4.16.6</ecNumber>
    </recommendedName>
    <alternativeName>
        <fullName>Carboxypeptidase D</fullName>
    </alternativeName>
</protein>
<dbReference type="EC" id="3.4.16.6"/>
<dbReference type="EMBL" id="CU640366">
    <property type="protein sequence ID" value="CAP73640.1"/>
    <property type="molecule type" value="Genomic_DNA"/>
</dbReference>
<dbReference type="EMBL" id="FO904937">
    <property type="protein sequence ID" value="CDP26043.1"/>
    <property type="molecule type" value="Genomic_DNA"/>
</dbReference>
<dbReference type="RefSeq" id="XP_001911812.1">
    <property type="nucleotide sequence ID" value="XM_001911777.1"/>
</dbReference>
<dbReference type="SMR" id="B2B762"/>
<dbReference type="FunCoup" id="B2B762">
    <property type="interactions" value="108"/>
</dbReference>
<dbReference type="STRING" id="515849.B2B762"/>
<dbReference type="ESTHER" id="podan-kex1">
    <property type="family name" value="Carboxypeptidase_S10"/>
</dbReference>
<dbReference type="MEROPS" id="S10.007"/>
<dbReference type="GlyCosmos" id="B2B762">
    <property type="glycosylation" value="3 sites, No reported glycans"/>
</dbReference>
<dbReference type="GeneID" id="6195504"/>
<dbReference type="KEGG" id="pan:PODANSg8857"/>
<dbReference type="VEuPathDB" id="FungiDB:PODANS_2_10030"/>
<dbReference type="eggNOG" id="KOG1282">
    <property type="taxonomic scope" value="Eukaryota"/>
</dbReference>
<dbReference type="HOGENOM" id="CLU_008523_11_0_1"/>
<dbReference type="InParanoid" id="B2B762"/>
<dbReference type="OrthoDB" id="443318at2759"/>
<dbReference type="Proteomes" id="UP000001197">
    <property type="component" value="Chromosome 2"/>
</dbReference>
<dbReference type="GO" id="GO:0016020">
    <property type="term" value="C:membrane"/>
    <property type="evidence" value="ECO:0007669"/>
    <property type="project" value="UniProtKB-KW"/>
</dbReference>
<dbReference type="GO" id="GO:0005802">
    <property type="term" value="C:trans-Golgi network"/>
    <property type="evidence" value="ECO:0007669"/>
    <property type="project" value="TreeGrafter"/>
</dbReference>
<dbReference type="GO" id="GO:0004185">
    <property type="term" value="F:serine-type carboxypeptidase activity"/>
    <property type="evidence" value="ECO:0007669"/>
    <property type="project" value="UniProtKB-EC"/>
</dbReference>
<dbReference type="GO" id="GO:0006915">
    <property type="term" value="P:apoptotic process"/>
    <property type="evidence" value="ECO:0007669"/>
    <property type="project" value="UniProtKB-KW"/>
</dbReference>
<dbReference type="GO" id="GO:0006508">
    <property type="term" value="P:proteolysis"/>
    <property type="evidence" value="ECO:0007669"/>
    <property type="project" value="UniProtKB-KW"/>
</dbReference>
<dbReference type="FunFam" id="3.40.50.1820:FF:000121">
    <property type="entry name" value="Carboxypeptidase D"/>
    <property type="match status" value="1"/>
</dbReference>
<dbReference type="Gene3D" id="3.40.50.1820">
    <property type="entry name" value="alpha/beta hydrolase"/>
    <property type="match status" value="1"/>
</dbReference>
<dbReference type="InterPro" id="IPR029058">
    <property type="entry name" value="AB_hydrolase_fold"/>
</dbReference>
<dbReference type="InterPro" id="IPR001563">
    <property type="entry name" value="Peptidase_S10"/>
</dbReference>
<dbReference type="InterPro" id="IPR018202">
    <property type="entry name" value="Ser_caboxypep_ser_AS"/>
</dbReference>
<dbReference type="PANTHER" id="PTHR11802:SF190">
    <property type="entry name" value="PHEROMONE-PROCESSING CARBOXYPEPTIDASE KEX1"/>
    <property type="match status" value="1"/>
</dbReference>
<dbReference type="PANTHER" id="PTHR11802">
    <property type="entry name" value="SERINE PROTEASE FAMILY S10 SERINE CARBOXYPEPTIDASE"/>
    <property type="match status" value="1"/>
</dbReference>
<dbReference type="Pfam" id="PF00450">
    <property type="entry name" value="Peptidase_S10"/>
    <property type="match status" value="1"/>
</dbReference>
<dbReference type="PRINTS" id="PR00724">
    <property type="entry name" value="CRBOXYPTASEC"/>
</dbReference>
<dbReference type="SUPFAM" id="SSF53474">
    <property type="entry name" value="alpha/beta-Hydrolases"/>
    <property type="match status" value="1"/>
</dbReference>
<dbReference type="PROSITE" id="PS00131">
    <property type="entry name" value="CARBOXYPEPT_SER_SER"/>
    <property type="match status" value="1"/>
</dbReference>
<name>KEX1_PODAN</name>